<reference key="1">
    <citation type="journal article" date="1992" name="Proc. Natl. Acad. Sci. U.S.A.">
        <title>Molecular cloning and characterization of the human cardiac Na+/Ca2+ exchanger cDNA.</title>
        <authorList>
            <person name="Komuro I."/>
            <person name="Wenninger K.E."/>
            <person name="Philipson K.D."/>
            <person name="Izumo S."/>
        </authorList>
    </citation>
    <scope>NUCLEOTIDE SEQUENCE [MRNA] (ISOFORM 1)</scope>
    <scope>FUNCTION</scope>
    <scope>TRANSPORTER ACTIVITY</scope>
    <scope>SUBCELLULAR LOCATION</scope>
    <scope>TISSUE SPECIFICITY</scope>
    <source>
        <tissue>Heart</tissue>
    </source>
</reference>
<reference key="2">
    <citation type="journal article" date="2001" name="J. Endocrinol.">
        <title>NCX1 Na/Ca exchanger splice variants in pancreatic islet cells.</title>
        <authorList>
            <person name="Van Eylen F."/>
            <person name="Bollen A."/>
            <person name="Herchuelz A."/>
        </authorList>
    </citation>
    <scope>NUCLEOTIDE SEQUENCE [MRNA] (ISOFORMS 3 AND 7)</scope>
    <scope>FUNCTION</scope>
    <scope>TRANSPORTER ACTIVITY</scope>
    <scope>SUBCELLULAR LOCATION</scope>
</reference>
<reference key="3">
    <citation type="submission" date="1999-02" db="EMBL/GenBank/DDBJ databases">
        <title>Na+/Ca2+ exchanger isoforms in cultured human retinal pigment epithelium.</title>
        <authorList>
            <person name="Mangini N.J."/>
            <person name="Chen W."/>
            <person name="Wang Q."/>
            <person name="Kennedy B.G."/>
        </authorList>
    </citation>
    <scope>NUCLEOTIDE SEQUENCE [MRNA] (ISOFORM 7)</scope>
</reference>
<reference key="4">
    <citation type="journal article" date="2004" name="Nat. Genet.">
        <title>Complete sequencing and characterization of 21,243 full-length human cDNAs.</title>
        <authorList>
            <person name="Ota T."/>
            <person name="Suzuki Y."/>
            <person name="Nishikawa T."/>
            <person name="Otsuki T."/>
            <person name="Sugiyama T."/>
            <person name="Irie R."/>
            <person name="Wakamatsu A."/>
            <person name="Hayashi K."/>
            <person name="Sato H."/>
            <person name="Nagai K."/>
            <person name="Kimura K."/>
            <person name="Makita H."/>
            <person name="Sekine M."/>
            <person name="Obayashi M."/>
            <person name="Nishi T."/>
            <person name="Shibahara T."/>
            <person name="Tanaka T."/>
            <person name="Ishii S."/>
            <person name="Yamamoto J."/>
            <person name="Saito K."/>
            <person name="Kawai Y."/>
            <person name="Isono Y."/>
            <person name="Nakamura Y."/>
            <person name="Nagahari K."/>
            <person name="Murakami K."/>
            <person name="Yasuda T."/>
            <person name="Iwayanagi T."/>
            <person name="Wagatsuma M."/>
            <person name="Shiratori A."/>
            <person name="Sudo H."/>
            <person name="Hosoiri T."/>
            <person name="Kaku Y."/>
            <person name="Kodaira H."/>
            <person name="Kondo H."/>
            <person name="Sugawara M."/>
            <person name="Takahashi M."/>
            <person name="Kanda K."/>
            <person name="Yokoi T."/>
            <person name="Furuya T."/>
            <person name="Kikkawa E."/>
            <person name="Omura Y."/>
            <person name="Abe K."/>
            <person name="Kamihara K."/>
            <person name="Katsuta N."/>
            <person name="Sato K."/>
            <person name="Tanikawa M."/>
            <person name="Yamazaki M."/>
            <person name="Ninomiya K."/>
            <person name="Ishibashi T."/>
            <person name="Yamashita H."/>
            <person name="Murakawa K."/>
            <person name="Fujimori K."/>
            <person name="Tanai H."/>
            <person name="Kimata M."/>
            <person name="Watanabe M."/>
            <person name="Hiraoka S."/>
            <person name="Chiba Y."/>
            <person name="Ishida S."/>
            <person name="Ono Y."/>
            <person name="Takiguchi S."/>
            <person name="Watanabe S."/>
            <person name="Yosida M."/>
            <person name="Hotuta T."/>
            <person name="Kusano J."/>
            <person name="Kanehori K."/>
            <person name="Takahashi-Fujii A."/>
            <person name="Hara H."/>
            <person name="Tanase T.-O."/>
            <person name="Nomura Y."/>
            <person name="Togiya S."/>
            <person name="Komai F."/>
            <person name="Hara R."/>
            <person name="Takeuchi K."/>
            <person name="Arita M."/>
            <person name="Imose N."/>
            <person name="Musashino K."/>
            <person name="Yuuki H."/>
            <person name="Oshima A."/>
            <person name="Sasaki N."/>
            <person name="Aotsuka S."/>
            <person name="Yoshikawa Y."/>
            <person name="Matsunawa H."/>
            <person name="Ichihara T."/>
            <person name="Shiohata N."/>
            <person name="Sano S."/>
            <person name="Moriya S."/>
            <person name="Momiyama H."/>
            <person name="Satoh N."/>
            <person name="Takami S."/>
            <person name="Terashima Y."/>
            <person name="Suzuki O."/>
            <person name="Nakagawa S."/>
            <person name="Senoh A."/>
            <person name="Mizoguchi H."/>
            <person name="Goto Y."/>
            <person name="Shimizu F."/>
            <person name="Wakebe H."/>
            <person name="Hishigaki H."/>
            <person name="Watanabe T."/>
            <person name="Sugiyama A."/>
            <person name="Takemoto M."/>
            <person name="Kawakami B."/>
            <person name="Yamazaki M."/>
            <person name="Watanabe K."/>
            <person name="Kumagai A."/>
            <person name="Itakura S."/>
            <person name="Fukuzumi Y."/>
            <person name="Fujimori Y."/>
            <person name="Komiyama M."/>
            <person name="Tashiro H."/>
            <person name="Tanigami A."/>
            <person name="Fujiwara T."/>
            <person name="Ono T."/>
            <person name="Yamada K."/>
            <person name="Fujii Y."/>
            <person name="Ozaki K."/>
            <person name="Hirao M."/>
            <person name="Ohmori Y."/>
            <person name="Kawabata A."/>
            <person name="Hikiji T."/>
            <person name="Kobatake N."/>
            <person name="Inagaki H."/>
            <person name="Ikema Y."/>
            <person name="Okamoto S."/>
            <person name="Okitani R."/>
            <person name="Kawakami T."/>
            <person name="Noguchi S."/>
            <person name="Itoh T."/>
            <person name="Shigeta K."/>
            <person name="Senba T."/>
            <person name="Matsumura K."/>
            <person name="Nakajima Y."/>
            <person name="Mizuno T."/>
            <person name="Morinaga M."/>
            <person name="Sasaki M."/>
            <person name="Togashi T."/>
            <person name="Oyama M."/>
            <person name="Hata H."/>
            <person name="Watanabe M."/>
            <person name="Komatsu T."/>
            <person name="Mizushima-Sugano J."/>
            <person name="Satoh T."/>
            <person name="Shirai Y."/>
            <person name="Takahashi Y."/>
            <person name="Nakagawa K."/>
            <person name="Okumura K."/>
            <person name="Nagase T."/>
            <person name="Nomura N."/>
            <person name="Kikuchi H."/>
            <person name="Masuho Y."/>
            <person name="Yamashita R."/>
            <person name="Nakai K."/>
            <person name="Yada T."/>
            <person name="Nakamura Y."/>
            <person name="Ohara O."/>
            <person name="Isogai T."/>
            <person name="Sugano S."/>
        </authorList>
    </citation>
    <scope>NUCLEOTIDE SEQUENCE [LARGE SCALE MRNA] (ISOFORM 3)</scope>
    <source>
        <tissue>Placenta</tissue>
    </source>
</reference>
<reference key="5">
    <citation type="journal article" date="2005" name="Nature">
        <title>Generation and annotation of the DNA sequences of human chromosomes 2 and 4.</title>
        <authorList>
            <person name="Hillier L.W."/>
            <person name="Graves T.A."/>
            <person name="Fulton R.S."/>
            <person name="Fulton L.A."/>
            <person name="Pepin K.H."/>
            <person name="Minx P."/>
            <person name="Wagner-McPherson C."/>
            <person name="Layman D."/>
            <person name="Wylie K."/>
            <person name="Sekhon M."/>
            <person name="Becker M.C."/>
            <person name="Fewell G.A."/>
            <person name="Delehaunty K.D."/>
            <person name="Miner T.L."/>
            <person name="Nash W.E."/>
            <person name="Kremitzki C."/>
            <person name="Oddy L."/>
            <person name="Du H."/>
            <person name="Sun H."/>
            <person name="Bradshaw-Cordum H."/>
            <person name="Ali J."/>
            <person name="Carter J."/>
            <person name="Cordes M."/>
            <person name="Harris A."/>
            <person name="Isak A."/>
            <person name="van Brunt A."/>
            <person name="Nguyen C."/>
            <person name="Du F."/>
            <person name="Courtney L."/>
            <person name="Kalicki J."/>
            <person name="Ozersky P."/>
            <person name="Abbott S."/>
            <person name="Armstrong J."/>
            <person name="Belter E.A."/>
            <person name="Caruso L."/>
            <person name="Cedroni M."/>
            <person name="Cotton M."/>
            <person name="Davidson T."/>
            <person name="Desai A."/>
            <person name="Elliott G."/>
            <person name="Erb T."/>
            <person name="Fronick C."/>
            <person name="Gaige T."/>
            <person name="Haakenson W."/>
            <person name="Haglund K."/>
            <person name="Holmes A."/>
            <person name="Harkins R."/>
            <person name="Kim K."/>
            <person name="Kruchowski S.S."/>
            <person name="Strong C.M."/>
            <person name="Grewal N."/>
            <person name="Goyea E."/>
            <person name="Hou S."/>
            <person name="Levy A."/>
            <person name="Martinka S."/>
            <person name="Mead K."/>
            <person name="McLellan M.D."/>
            <person name="Meyer R."/>
            <person name="Randall-Maher J."/>
            <person name="Tomlinson C."/>
            <person name="Dauphin-Kohlberg S."/>
            <person name="Kozlowicz-Reilly A."/>
            <person name="Shah N."/>
            <person name="Swearengen-Shahid S."/>
            <person name="Snider J."/>
            <person name="Strong J.T."/>
            <person name="Thompson J."/>
            <person name="Yoakum M."/>
            <person name="Leonard S."/>
            <person name="Pearman C."/>
            <person name="Trani L."/>
            <person name="Radionenko M."/>
            <person name="Waligorski J.E."/>
            <person name="Wang C."/>
            <person name="Rock S.M."/>
            <person name="Tin-Wollam A.-M."/>
            <person name="Maupin R."/>
            <person name="Latreille P."/>
            <person name="Wendl M.C."/>
            <person name="Yang S.-P."/>
            <person name="Pohl C."/>
            <person name="Wallis J.W."/>
            <person name="Spieth J."/>
            <person name="Bieri T.A."/>
            <person name="Berkowicz N."/>
            <person name="Nelson J.O."/>
            <person name="Osborne J."/>
            <person name="Ding L."/>
            <person name="Meyer R."/>
            <person name="Sabo A."/>
            <person name="Shotland Y."/>
            <person name="Sinha P."/>
            <person name="Wohldmann P.E."/>
            <person name="Cook L.L."/>
            <person name="Hickenbotham M.T."/>
            <person name="Eldred J."/>
            <person name="Williams D."/>
            <person name="Jones T.A."/>
            <person name="She X."/>
            <person name="Ciccarelli F.D."/>
            <person name="Izaurralde E."/>
            <person name="Taylor J."/>
            <person name="Schmutz J."/>
            <person name="Myers R.M."/>
            <person name="Cox D.R."/>
            <person name="Huang X."/>
            <person name="McPherson J.D."/>
            <person name="Mardis E.R."/>
            <person name="Clifton S.W."/>
            <person name="Warren W.C."/>
            <person name="Chinwalla A.T."/>
            <person name="Eddy S.R."/>
            <person name="Marra M.A."/>
            <person name="Ovcharenko I."/>
            <person name="Furey T.S."/>
            <person name="Miller W."/>
            <person name="Eichler E.E."/>
            <person name="Bork P."/>
            <person name="Suyama M."/>
            <person name="Torrents D."/>
            <person name="Waterston R.H."/>
            <person name="Wilson R.K."/>
        </authorList>
    </citation>
    <scope>NUCLEOTIDE SEQUENCE [LARGE SCALE GENOMIC DNA]</scope>
</reference>
<reference key="6">
    <citation type="submission" date="2005-09" db="EMBL/GenBank/DDBJ databases">
        <authorList>
            <person name="Mural R.J."/>
            <person name="Istrail S."/>
            <person name="Sutton G.G."/>
            <person name="Florea L."/>
            <person name="Halpern A.L."/>
            <person name="Mobarry C.M."/>
            <person name="Lippert R."/>
            <person name="Walenz B."/>
            <person name="Shatkay H."/>
            <person name="Dew I."/>
            <person name="Miller J.R."/>
            <person name="Flanigan M.J."/>
            <person name="Edwards N.J."/>
            <person name="Bolanos R."/>
            <person name="Fasulo D."/>
            <person name="Halldorsson B.V."/>
            <person name="Hannenhalli S."/>
            <person name="Turner R."/>
            <person name="Yooseph S."/>
            <person name="Lu F."/>
            <person name="Nusskern D.R."/>
            <person name="Shue B.C."/>
            <person name="Zheng X.H."/>
            <person name="Zhong F."/>
            <person name="Delcher A.L."/>
            <person name="Huson D.H."/>
            <person name="Kravitz S.A."/>
            <person name="Mouchard L."/>
            <person name="Reinert K."/>
            <person name="Remington K.A."/>
            <person name="Clark A.G."/>
            <person name="Waterman M.S."/>
            <person name="Eichler E.E."/>
            <person name="Adams M.D."/>
            <person name="Hunkapiller M.W."/>
            <person name="Myers E.W."/>
            <person name="Venter J.C."/>
        </authorList>
    </citation>
    <scope>NUCLEOTIDE SEQUENCE [LARGE SCALE GENOMIC DNA]</scope>
</reference>
<reference key="7">
    <citation type="journal article" date="2000" name="Calcif. Tissue Int.">
        <title>Na+/Ca2+ exchanger isoforms of rat odontoblasts and osteoblasts.</title>
        <authorList>
            <person name="Lundquist P."/>
            <person name="Lundgren T."/>
            <person name="Gritli-Linde A."/>
            <person name="Linde A."/>
        </authorList>
    </citation>
    <scope>NUCLEOTIDE SEQUENCE [MRNA] OF 459-681 (ISOFORM 10)</scope>
</reference>
<reference key="8">
    <citation type="submission" date="2005-03" db="EMBL/GenBank/DDBJ databases">
        <title>Homo sapiens protein coding cDNA.</title>
        <authorList>
            <person name="Totoki Y."/>
            <person name="Toyoda A."/>
            <person name="Takeda T."/>
            <person name="Sakaki Y."/>
            <person name="Tanaka A."/>
            <person name="Yokoyama S."/>
            <person name="Ohara O."/>
            <person name="Nagase T."/>
            <person name="Kikuno R.F."/>
        </authorList>
    </citation>
    <scope>NUCLEOTIDE SEQUENCE [LARGE SCALE MRNA] OF 558-973 (ISOFORM 5)</scope>
    <source>
        <tissue>Brain</tissue>
    </source>
</reference>
<reference key="9">
    <citation type="journal article" date="2004" name="Genome Res.">
        <title>The status, quality, and expansion of the NIH full-length cDNA project: the Mammalian Gene Collection (MGC).</title>
        <authorList>
            <consortium name="The MGC Project Team"/>
        </authorList>
    </citation>
    <scope>NUCLEOTIDE SEQUENCE [LARGE SCALE MRNA] OF 594-973 (ISOFORM 5)</scope>
</reference>
<reference key="10">
    <citation type="journal article" date="1994" name="Am. J. Physiol.">
        <title>Functional expression of human renal Na+/Ca2+ exchanger in insect cells.</title>
        <authorList>
            <person name="Loo T.W."/>
            <person name="Clarke D.M."/>
        </authorList>
    </citation>
    <scope>NUCLEOTIDE SEQUENCE [MRNA] OF 600-684 (ISOFORM 3)</scope>
    <source>
        <tissue>Embryonic kidney</tissue>
    </source>
</reference>
<reference key="11">
    <citation type="journal article" date="1992" name="Am. J. Physiol.">
        <title>Expression of the Na-Ca exchanger in diverse tissues: a study using the cloned human cardiac Na-Ca exchanger.</title>
        <authorList>
            <person name="Kofuji P."/>
            <person name="Hadley R.W."/>
            <person name="Kieval R.S."/>
            <person name="Lederer W.J."/>
            <person name="Schulze D.H."/>
        </authorList>
    </citation>
    <scope>FUNCTION</scope>
    <scope>SUBCELLULAR LOCATION</scope>
    <scope>TISSUE SPECIFICITY</scope>
</reference>
<reference key="12">
    <citation type="journal article" date="2013" name="J. Mol. Cell. Cardiol.">
        <title>The topology of the cardiac Na(+)/Ca(2)(+) exchanger, NCX1.</title>
        <authorList>
            <person name="Ren X."/>
            <person name="Philipson K.D."/>
        </authorList>
    </citation>
    <scope>TOPOLOGY</scope>
</reference>
<reference key="13">
    <citation type="journal article" date="2013" name="Mol. Aspects Med.">
        <title>The SLC8 gene family of sodium-calcium exchangers (NCX) - structure, function, and regulation in health and disease.</title>
        <authorList>
            <person name="Khananshvili D."/>
        </authorList>
    </citation>
    <scope>REVIEW</scope>
</reference>
<proteinExistence type="evidence at protein level"/>
<name>NAC1_HUMAN</name>
<keyword id="KW-0002">3D-structure</keyword>
<keyword id="KW-0025">Alternative splicing</keyword>
<keyword id="KW-0050">Antiport</keyword>
<keyword id="KW-0106">Calcium</keyword>
<keyword id="KW-0109">Calcium transport</keyword>
<keyword id="KW-0112">Calmodulin-binding</keyword>
<keyword id="KW-1003">Cell membrane</keyword>
<keyword id="KW-0325">Glycoprotein</keyword>
<keyword id="KW-0406">Ion transport</keyword>
<keyword id="KW-0472">Membrane</keyword>
<keyword id="KW-0479">Metal-binding</keyword>
<keyword id="KW-0597">Phosphoprotein</keyword>
<keyword id="KW-1267">Proteomics identification</keyword>
<keyword id="KW-1185">Reference proteome</keyword>
<keyword id="KW-0677">Repeat</keyword>
<keyword id="KW-0732">Signal</keyword>
<keyword id="KW-0915">Sodium</keyword>
<keyword id="KW-0739">Sodium transport</keyword>
<keyword id="KW-0812">Transmembrane</keyword>
<keyword id="KW-1133">Transmembrane helix</keyword>
<keyword id="KW-0813">Transport</keyword>
<accession>P32418</accession>
<accession>A8K6N1</accession>
<accession>D6W595</accession>
<accession>O95849</accession>
<accession>Q4QQG6</accession>
<accession>Q587I6</accession>
<accession>Q59GN4</accession>
<accession>Q9UBL8</accession>
<accession>Q9UD55</accession>
<accession>Q9UDN1</accession>
<accession>Q9UDN2</accession>
<accession>Q9UKX6</accession>
<comment type="function">
    <text evidence="2 5 6 7">Mediates the exchange of one Ca(2+) ion against three to four Na(+) ions across the cell membrane, and thereby contributes to the regulation of cytoplasmic Ca(2+) levels and Ca(2+)-dependent cellular processes (PubMed:11241183, PubMed:1374913, PubMed:1476165). Contributes to Ca(2+) transport during excitation-contraction coupling in muscle (PubMed:11241183, PubMed:1374913, PubMed:1476165). In a first phase, voltage-gated channels mediate the rapid increase of cytoplasmic Ca(2+) levels due to release of Ca(2+) stores from the endoplasmic reticulum (PubMed:11241183, PubMed:1374913, PubMed:1476165). SLC8A1 mediates the export of Ca(2+) from the cell during the next phase, so that cytoplasmic Ca(2+) levels rapidly return to baseline (PubMed:11241183, PubMed:1374913, PubMed:1476165). Required for normal embryonic heart development and the onset of heart contractions (By similarity).</text>
</comment>
<comment type="catalytic activity">
    <reaction evidence="5 6">
        <text>Ca(2+)(in) + 3 Na(+)(out) = Ca(2+)(out) + 3 Na(+)(in)</text>
        <dbReference type="Rhea" id="RHEA:69955"/>
        <dbReference type="ChEBI" id="CHEBI:29101"/>
        <dbReference type="ChEBI" id="CHEBI:29108"/>
    </reaction>
</comment>
<comment type="activity regulation">
    <text evidence="3">Activated by micromolar levels of Ca(2+).</text>
</comment>
<comment type="interaction">
    <interactant intactId="EBI-2682189">
        <id>P32418</id>
    </interactant>
    <interactant intactId="EBI-941994">
        <id>Q01484-2</id>
        <label>ANK2</label>
    </interactant>
    <organismsDiffer>false</organismsDiffer>
    <experiments>2</experiments>
</comment>
<comment type="interaction">
    <interactant intactId="EBI-2682189">
        <id>P32418</id>
    </interactant>
    <interactant intactId="EBI-743686">
        <id>P23297</id>
        <label>S100A1</label>
    </interactant>
    <organismsDiffer>false</organismsDiffer>
    <experiments>3</experiments>
</comment>
<comment type="interaction">
    <interactant intactId="EBI-2682189">
        <id>P32418</id>
    </interactant>
    <interactant intactId="EBI-7211732">
        <id>P33763</id>
        <label>S100A5</label>
    </interactant>
    <organismsDiffer>false</organismsDiffer>
    <experiments>2</experiments>
</comment>
<comment type="subcellular location">
    <subcellularLocation>
        <location evidence="5 6 7">Cell membrane</location>
        <topology evidence="8">Multi-pass membrane protein</topology>
    </subcellularLocation>
</comment>
<comment type="alternative products">
    <event type="alternative splicing"/>
    <isoform>
        <id>P32418-1</id>
        <name>1</name>
        <name>NaCa1</name>
        <name>NCX1.1</name>
        <sequence type="displayed"/>
    </isoform>
    <isoform>
        <id>P32418-2</id>
        <name>3</name>
        <name>NaCa3</name>
        <name>NCX1.3</name>
        <sequence type="described" ref="VSP_003397 VSP_003398 VSP_003400"/>
    </isoform>
    <isoform>
        <id>P32418-3</id>
        <name>7</name>
        <name>NaCa7</name>
        <name>NCX1.7</name>
        <sequence type="described" ref="VSP_003397 VSP_003398 VSP_003399"/>
    </isoform>
    <isoform>
        <id>P32418-4</id>
        <name>10</name>
        <name>NaCa10</name>
        <name>NCX1.10</name>
        <sequence type="described" ref="VSP_003397 VSP_003398"/>
    </isoform>
    <isoform>
        <id>P32418-5</id>
        <name>5</name>
        <sequence type="described" ref="VSP_003399"/>
    </isoform>
    <text>Additional isoforms seem to exist.</text>
</comment>
<comment type="tissue specificity">
    <text evidence="6 7">Detected primarily in heart and at lower levels in brain (PubMed:1374913). Expressed in cardiac sarcolemma, brain, kidney, liver, pancreas, skeletal muscle, placenta and lung (PubMed:1476165).</text>
</comment>
<comment type="domain">
    <text evidence="1">The cytoplasmic Calx-beta domains bind the regulatory Ca(2+). The first Calx-beta domain can bind up to four Ca(2+) ions. The second domain can bind another two Ca(2+) ions that are essential for calcium-regulated ion exchange.</text>
</comment>
<comment type="similarity">
    <text evidence="17">Belongs to the Ca(2+):cation antiporter (CaCA) (TC 2.A.19) family. SLC8 subfamily.</text>
</comment>
<comment type="sequence caution" evidence="17">
    <conflict type="erroneous initiation">
        <sequence resource="EMBL-CDS" id="AAH98308"/>
    </conflict>
    <text>Truncated N-terminus.</text>
</comment>
<organism>
    <name type="scientific">Homo sapiens</name>
    <name type="common">Human</name>
    <dbReference type="NCBI Taxonomy" id="9606"/>
    <lineage>
        <taxon>Eukaryota</taxon>
        <taxon>Metazoa</taxon>
        <taxon>Chordata</taxon>
        <taxon>Craniata</taxon>
        <taxon>Vertebrata</taxon>
        <taxon>Euteleostomi</taxon>
        <taxon>Mammalia</taxon>
        <taxon>Eutheria</taxon>
        <taxon>Euarchontoglires</taxon>
        <taxon>Primates</taxon>
        <taxon>Haplorrhini</taxon>
        <taxon>Catarrhini</taxon>
        <taxon>Hominidae</taxon>
        <taxon>Homo</taxon>
    </lineage>
</organism>
<sequence length="973" mass="108547">MYNMRRLSLSPTFSMGFHLLVTVSLLFSHVDHVIAETEMEGEGNETGECTGSYYCKKGVILPIWEPQDPSFGDKIARATVYFVAMVYMFLGVSIIADRFMSSIEVITSQEKEITIKKPNGETTKTTVRIWNETVSNLTLMALGSSAPEILLSVIEVCGHNFTAGDLGPSTIVGSAAFNMFIIIALCVYVVPDGETRKIKHLRVFFVTAAWSIFAYTWLYIILSVISPGVVEVWEGLLTFFFFPICVVFAWVADRRLLFYKYVYKRYRAGKQRGMIIEHEGDRPSSKTEIEMDGKVVNSHVENFLDGALVLEVDERDQDDEEARREMARILKELKQKHPDKEIEQLIELANYQVLSQQQKSRAFYRIQATRLMTGAGNILKRHAADQARKAVSMHEVNTEVTENDPVSKIFFEQGTYQCLENCGTVALTIIRRGGDLTNTVFVDFRTEDGTANAGSDYEFTEGTVVFKPGDTQKEIRVGIIDDDIFEEDENFLVHLSNVKVSSEASEDGILEANHVSTLACLGSPSTATVTIFDDDHAGIFTFEEPVTHVSESIGIMEVKVLRTSGARGNVIVPYKTIEGTARGGGEDFEDTCGELEFQNDEIVKTISVKVIDDEEYEKNKTFFLEIGEPRLVEMSEKKALLLNELGGFTITGKYLFGQPVFRKVHAREHPILSTVITIADEYDDKQPLTSKEEEERRIAEMGRPILGEHTKLEVIIEESYEFKSTVDKLIKKTNLALVVGTNSWREQFIEAITVSAGEDDDDDECGEEKLPSCFDYVMHFLTVFWKVLFAFVPPTEYWNGWACFIVSILMIGLLTAFIGDLASHFGCTIGLKDSVTAVVFVALGTSVPDTFASKVAATQDQYADASIGNVTGSNAVNVFLGIGVAWSIAAIYHAANGEQFKVSPGTLAFSVTLFTIFAFINVGVLLYRRRPEIGGELGGPRTAKLLTSCLFVLLWLLYIFFSSLEAYCHIKGF</sequence>
<feature type="signal peptide" evidence="4">
    <location>
        <begin position="1"/>
        <end position="35"/>
    </location>
</feature>
<feature type="chain" id="PRO_0000019379" description="Sodium/calcium exchanger 1">
    <location>
        <begin position="36"/>
        <end position="973"/>
    </location>
</feature>
<feature type="topological domain" description="Extracellular" evidence="4">
    <location>
        <begin position="36"/>
        <end position="74"/>
    </location>
</feature>
<feature type="transmembrane region" description="Helical" evidence="4">
    <location>
        <begin position="75"/>
        <end position="95"/>
    </location>
</feature>
<feature type="topological domain" description="Cytoplasmic" evidence="4">
    <location>
        <begin position="96"/>
        <end position="136"/>
    </location>
</feature>
<feature type="transmembrane region" description="Helical" evidence="4">
    <location>
        <begin position="137"/>
        <end position="157"/>
    </location>
</feature>
<feature type="topological domain" description="Extracellular" evidence="4">
    <location>
        <begin position="158"/>
        <end position="170"/>
    </location>
</feature>
<feature type="transmembrane region" description="Helical" evidence="4">
    <location>
        <begin position="171"/>
        <end position="191"/>
    </location>
</feature>
<feature type="topological domain" description="Cytoplasmic" evidence="4">
    <location>
        <begin position="192"/>
        <end position="204"/>
    </location>
</feature>
<feature type="transmembrane region" description="Helical" evidence="4">
    <location>
        <begin position="205"/>
        <end position="225"/>
    </location>
</feature>
<feature type="topological domain" description="Extracellular" evidence="4">
    <location>
        <begin position="226"/>
        <end position="231"/>
    </location>
</feature>
<feature type="transmembrane region" description="Helical" evidence="4">
    <location>
        <begin position="232"/>
        <end position="252"/>
    </location>
</feature>
<feature type="topological domain" description="Cytoplasmic" evidence="4">
    <location>
        <begin position="253"/>
        <end position="800"/>
    </location>
</feature>
<feature type="transmembrane region" description="Helical" evidence="4">
    <location>
        <begin position="801"/>
        <end position="821"/>
    </location>
</feature>
<feature type="topological domain" description="Extracellular" evidence="4">
    <location>
        <begin position="822"/>
        <end position="824"/>
    </location>
</feature>
<feature type="transmembrane region" description="Helical" evidence="4">
    <location>
        <begin position="825"/>
        <end position="845"/>
    </location>
</feature>
<feature type="topological domain" description="Cytoplasmic" evidence="4">
    <location>
        <begin position="846"/>
        <end position="874"/>
    </location>
</feature>
<feature type="transmembrane region" description="Helical" evidence="4">
    <location>
        <begin position="875"/>
        <end position="895"/>
    </location>
</feature>
<feature type="topological domain" description="Extracellular" evidence="4">
    <location>
        <begin position="896"/>
        <end position="906"/>
    </location>
</feature>
<feature type="transmembrane region" description="Helical" evidence="4">
    <location>
        <begin position="907"/>
        <end position="927"/>
    </location>
</feature>
<feature type="topological domain" description="Cytoplasmic" evidence="4">
    <location>
        <begin position="928"/>
        <end position="944"/>
    </location>
</feature>
<feature type="transmembrane region" description="Helical" evidence="4">
    <location>
        <begin position="945"/>
        <end position="965"/>
    </location>
</feature>
<feature type="topological domain" description="Extracellular" evidence="4">
    <location>
        <begin position="966"/>
        <end position="973"/>
    </location>
</feature>
<feature type="repeat" description="Alpha-1">
    <location>
        <begin position="141"/>
        <end position="181"/>
    </location>
</feature>
<feature type="domain" description="Calx-beta 1">
    <location>
        <begin position="396"/>
        <end position="496"/>
    </location>
</feature>
<feature type="domain" description="Calx-beta 2">
    <location>
        <begin position="527"/>
        <end position="627"/>
    </location>
</feature>
<feature type="repeat" description="Alpha-2">
    <location>
        <begin position="842"/>
        <end position="878"/>
    </location>
</feature>
<feature type="region of interest" description="Putative calmodulin-binding region" evidence="1">
    <location>
        <begin position="254"/>
        <end position="273"/>
    </location>
</feature>
<feature type="binding site" evidence="1">
    <location>
        <position position="420"/>
    </location>
    <ligand>
        <name>Ca(2+)</name>
        <dbReference type="ChEBI" id="CHEBI:29108"/>
        <label>1</label>
    </ligand>
</feature>
<feature type="binding site" evidence="1">
    <location>
        <position position="420"/>
    </location>
    <ligand>
        <name>Ca(2+)</name>
        <dbReference type="ChEBI" id="CHEBI:29108"/>
        <label>2</label>
    </ligand>
</feature>
<feature type="binding site" evidence="1">
    <location>
        <position position="420"/>
    </location>
    <ligand>
        <name>Ca(2+)</name>
        <dbReference type="ChEBI" id="CHEBI:29108"/>
        <label>3</label>
    </ligand>
</feature>
<feature type="binding site" evidence="1">
    <location>
        <position position="456"/>
    </location>
    <ligand>
        <name>Ca(2+)</name>
        <dbReference type="ChEBI" id="CHEBI:29108"/>
        <label>1</label>
    </ligand>
</feature>
<feature type="binding site" evidence="1">
    <location>
        <position position="456"/>
    </location>
    <ligand>
        <name>Ca(2+)</name>
        <dbReference type="ChEBI" id="CHEBI:29108"/>
        <label>4</label>
    </ligand>
</feature>
<feature type="binding site" evidence="1">
    <location>
        <position position="481"/>
    </location>
    <ligand>
        <name>Ca(2+)</name>
        <dbReference type="ChEBI" id="CHEBI:29108"/>
        <label>2</label>
    </ligand>
</feature>
<feature type="binding site" evidence="1">
    <location>
        <position position="482"/>
    </location>
    <ligand>
        <name>Ca(2+)</name>
        <dbReference type="ChEBI" id="CHEBI:29108"/>
        <label>1</label>
    </ligand>
</feature>
<feature type="binding site" evidence="1">
    <location>
        <position position="482"/>
    </location>
    <ligand>
        <name>Ca(2+)</name>
        <dbReference type="ChEBI" id="CHEBI:29108"/>
        <label>2</label>
    </ligand>
</feature>
<feature type="binding site" evidence="1">
    <location>
        <position position="482"/>
    </location>
    <ligand>
        <name>Ca(2+)</name>
        <dbReference type="ChEBI" id="CHEBI:29108"/>
        <label>3</label>
    </ligand>
</feature>
<feature type="binding site" evidence="1">
    <location>
        <position position="482"/>
    </location>
    <ligand>
        <name>Ca(2+)</name>
        <dbReference type="ChEBI" id="CHEBI:29108"/>
        <label>4</label>
    </ligand>
</feature>
<feature type="binding site" evidence="1">
    <location>
        <position position="484"/>
    </location>
    <ligand>
        <name>Ca(2+)</name>
        <dbReference type="ChEBI" id="CHEBI:29108"/>
        <label>3</label>
    </ligand>
</feature>
<feature type="binding site" evidence="1">
    <location>
        <position position="486"/>
    </location>
    <ligand>
        <name>Ca(2+)</name>
        <dbReference type="ChEBI" id="CHEBI:29108"/>
        <label>1</label>
    </ligand>
</feature>
<feature type="binding site" evidence="1">
    <location>
        <position position="486"/>
    </location>
    <ligand>
        <name>Ca(2+)</name>
        <dbReference type="ChEBI" id="CHEBI:29108"/>
        <label>3</label>
    </ligand>
</feature>
<feature type="binding site" evidence="1">
    <location>
        <position position="486"/>
    </location>
    <ligand>
        <name>Ca(2+)</name>
        <dbReference type="ChEBI" id="CHEBI:29108"/>
        <label>4</label>
    </ligand>
</feature>
<feature type="binding site" evidence="1">
    <location>
        <position position="489"/>
    </location>
    <ligand>
        <name>Ca(2+)</name>
        <dbReference type="ChEBI" id="CHEBI:29108"/>
        <label>4</label>
    </ligand>
</feature>
<feature type="binding site" evidence="1">
    <location>
        <position position="533"/>
    </location>
    <ligand>
        <name>Ca(2+)</name>
        <dbReference type="ChEBI" id="CHEBI:29108"/>
        <label>3</label>
    </ligand>
</feature>
<feature type="binding site" evidence="1">
    <location>
        <position position="534"/>
    </location>
    <ligand>
        <name>Ca(2+)</name>
        <dbReference type="ChEBI" id="CHEBI:29108"/>
        <label>2</label>
    </ligand>
</feature>
<feature type="binding site" evidence="1">
    <location>
        <position position="535"/>
    </location>
    <ligand>
        <name>Ca(2+)</name>
        <dbReference type="ChEBI" id="CHEBI:29108"/>
        <label>2</label>
    </ligand>
</feature>
<feature type="binding site" evidence="1">
    <location>
        <position position="535"/>
    </location>
    <ligand>
        <name>Ca(2+)</name>
        <dbReference type="ChEBI" id="CHEBI:29108"/>
        <label>3</label>
    </ligand>
</feature>
<feature type="binding site" evidence="1">
    <location>
        <position position="551"/>
    </location>
    <ligand>
        <name>Ca(2+)</name>
        <dbReference type="ChEBI" id="CHEBI:29108"/>
        <label>5</label>
    </ligand>
</feature>
<feature type="binding site" evidence="1">
    <location>
        <position position="587"/>
    </location>
    <ligand>
        <name>Ca(2+)</name>
        <dbReference type="ChEBI" id="CHEBI:29108"/>
        <label>6</label>
    </ligand>
</feature>
<feature type="binding site" evidence="1">
    <location>
        <position position="613"/>
    </location>
    <ligand>
        <name>Ca(2+)</name>
        <dbReference type="ChEBI" id="CHEBI:29108"/>
        <label>5</label>
    </ligand>
</feature>
<feature type="binding site" evidence="1">
    <location>
        <position position="613"/>
    </location>
    <ligand>
        <name>Ca(2+)</name>
        <dbReference type="ChEBI" id="CHEBI:29108"/>
        <label>6</label>
    </ligand>
</feature>
<feature type="binding site" evidence="1">
    <location>
        <position position="614"/>
    </location>
    <ligand>
        <name>Ca(2+)</name>
        <dbReference type="ChEBI" id="CHEBI:29108"/>
        <label>6</label>
    </ligand>
</feature>
<feature type="binding site" evidence="1">
    <location>
        <position position="615"/>
    </location>
    <ligand>
        <name>Ca(2+)</name>
        <dbReference type="ChEBI" id="CHEBI:29108"/>
        <label>5</label>
    </ligand>
</feature>
<feature type="binding site" evidence="1">
    <location>
        <position position="615"/>
    </location>
    <ligand>
        <name>Ca(2+)</name>
        <dbReference type="ChEBI" id="CHEBI:29108"/>
        <label>6</label>
    </ligand>
</feature>
<feature type="binding site" evidence="1">
    <location>
        <position position="718"/>
    </location>
    <ligand>
        <name>Ca(2+)</name>
        <dbReference type="ChEBI" id="CHEBI:29108"/>
        <label>5</label>
    </ligand>
</feature>
<feature type="modified residue" description="Phosphoserine" evidence="2">
    <location>
        <position position="285"/>
    </location>
</feature>
<feature type="modified residue" description="Phosphoserine" evidence="2 4">
    <location>
        <position position="392"/>
    </location>
</feature>
<feature type="glycosylation site" description="N-linked (GlcNAc...) asparagine" evidence="4">
    <location>
        <position position="44"/>
    </location>
</feature>
<feature type="glycosylation site" description="N-linked (GlcNAc...) asparagine" evidence="4">
    <location>
        <position position="160"/>
    </location>
</feature>
<feature type="splice variant" id="VSP_003397" description="In isoform 3, isoform 7 and isoform 10." evidence="9 10 11 14 15">
    <original>TISVKVIDD</original>
    <variation>IITIRIFDR</variation>
    <location>
        <begin position="605"/>
        <end position="613"/>
    </location>
</feature>
<feature type="splice variant" id="VSP_003398" description="In isoform 3, isoform 7 and isoform 10." evidence="9 10 11 14 15">
    <original>NKTFFLEIGEPRLVEMSEKKALLLNEL</original>
    <variation>ECSFSLVLEEPKWIRRGMK</variation>
    <location>
        <begin position="619"/>
        <end position="645"/>
    </location>
</feature>
<feature type="splice variant" id="VSP_003400" description="In isoform 3." evidence="10 11 14">
    <location>
        <begin position="652"/>
        <end position="679"/>
    </location>
</feature>
<feature type="splice variant" id="VSP_003399" description="In isoform 7 and isoform 5." evidence="10 12 15 16">
    <location>
        <begin position="652"/>
        <end position="656"/>
    </location>
</feature>
<feature type="sequence variant" id="VAR_014847" description="In dbSNP:rs5557.">
    <original>E</original>
    <variation>V</variation>
    <location>
        <position position="692"/>
    </location>
</feature>
<feature type="strand" evidence="19">
    <location>
        <begin position="59"/>
        <end position="61"/>
    </location>
</feature>
<feature type="strand" evidence="19">
    <location>
        <begin position="65"/>
        <end position="68"/>
    </location>
</feature>
<feature type="helix" evidence="19">
    <location>
        <begin position="72"/>
        <end position="106"/>
    </location>
</feature>
<feature type="strand" evidence="19">
    <location>
        <begin position="108"/>
        <end position="114"/>
    </location>
</feature>
<feature type="strand" evidence="19">
    <location>
        <begin position="118"/>
        <end position="120"/>
    </location>
</feature>
<feature type="strand" evidence="19">
    <location>
        <begin position="124"/>
        <end position="131"/>
    </location>
</feature>
<feature type="helix" evidence="19">
    <location>
        <begin position="134"/>
        <end position="144"/>
    </location>
</feature>
<feature type="helix" evidence="19">
    <location>
        <begin position="146"/>
        <end position="158"/>
    </location>
</feature>
<feature type="turn" evidence="18">
    <location>
        <begin position="159"/>
        <end position="161"/>
    </location>
</feature>
<feature type="helix" evidence="19">
    <location>
        <begin position="166"/>
        <end position="179"/>
    </location>
</feature>
<feature type="helix" evidence="19">
    <location>
        <begin position="181"/>
        <end position="189"/>
    </location>
</feature>
<feature type="strand" evidence="19">
    <location>
        <begin position="195"/>
        <end position="197"/>
    </location>
</feature>
<feature type="helix" evidence="19">
    <location>
        <begin position="201"/>
        <end position="223"/>
    </location>
</feature>
<feature type="helix" evidence="19">
    <location>
        <begin position="232"/>
        <end position="239"/>
    </location>
</feature>
<feature type="helix" evidence="19">
    <location>
        <begin position="241"/>
        <end position="254"/>
    </location>
</feature>
<feature type="helix" evidence="19">
    <location>
        <begin position="259"/>
        <end position="261"/>
    </location>
</feature>
<feature type="strand" evidence="19">
    <location>
        <begin position="262"/>
        <end position="268"/>
    </location>
</feature>
<feature type="strand" evidence="19">
    <location>
        <begin position="270"/>
        <end position="280"/>
    </location>
</feature>
<feature type="strand" evidence="19">
    <location>
        <begin position="407"/>
        <end position="419"/>
    </location>
</feature>
<feature type="helix" evidence="19">
    <location>
        <begin position="420"/>
        <end position="422"/>
    </location>
</feature>
<feature type="strand" evidence="19">
    <location>
        <begin position="423"/>
        <end position="434"/>
    </location>
</feature>
<feature type="strand" evidence="19">
    <location>
        <begin position="436"/>
        <end position="438"/>
    </location>
</feature>
<feature type="strand" evidence="19">
    <location>
        <begin position="440"/>
        <end position="447"/>
    </location>
</feature>
<feature type="strand" evidence="19">
    <location>
        <begin position="449"/>
        <end position="451"/>
    </location>
</feature>
<feature type="turn" evidence="19">
    <location>
        <begin position="453"/>
        <end position="455"/>
    </location>
</feature>
<feature type="strand" evidence="19">
    <location>
        <begin position="461"/>
        <end position="466"/>
    </location>
</feature>
<feature type="strand" evidence="19">
    <location>
        <begin position="472"/>
        <end position="479"/>
    </location>
</feature>
<feature type="strand" evidence="19">
    <location>
        <begin position="489"/>
        <end position="500"/>
    </location>
</feature>
<feature type="strand" evidence="19">
    <location>
        <begin position="519"/>
        <end position="521"/>
    </location>
</feature>
<feature type="strand" evidence="19">
    <location>
        <begin position="526"/>
        <end position="532"/>
    </location>
</feature>
<feature type="strand" evidence="19">
    <location>
        <begin position="539"/>
        <end position="543"/>
    </location>
</feature>
<feature type="strand" evidence="19">
    <location>
        <begin position="545"/>
        <end position="550"/>
    </location>
</feature>
<feature type="strand" evidence="19">
    <location>
        <begin position="554"/>
        <end position="562"/>
    </location>
</feature>
<feature type="strand" evidence="19">
    <location>
        <begin position="568"/>
        <end position="577"/>
    </location>
</feature>
<feature type="strand" evidence="19">
    <location>
        <begin position="579"/>
        <end position="581"/>
    </location>
</feature>
<feature type="strand" evidence="19">
    <location>
        <begin position="584"/>
        <end position="588"/>
    </location>
</feature>
<feature type="strand" evidence="19">
    <location>
        <begin position="592"/>
        <end position="597"/>
    </location>
</feature>
<feature type="strand" evidence="19">
    <location>
        <begin position="603"/>
        <end position="610"/>
    </location>
</feature>
<feature type="strand" evidence="19">
    <location>
        <begin position="619"/>
        <end position="626"/>
    </location>
</feature>
<feature type="strand" evidence="19">
    <location>
        <begin position="630"/>
        <end position="635"/>
    </location>
</feature>
<feature type="helix" evidence="19">
    <location>
        <begin position="636"/>
        <end position="642"/>
    </location>
</feature>
<feature type="strand" evidence="19">
    <location>
        <begin position="648"/>
        <end position="655"/>
    </location>
</feature>
<feature type="strand" evidence="19">
    <location>
        <begin position="658"/>
        <end position="663"/>
    </location>
</feature>
<feature type="strand" evidence="19">
    <location>
        <begin position="672"/>
        <end position="676"/>
    </location>
</feature>
<feature type="helix" evidence="19">
    <location>
        <begin position="692"/>
        <end position="700"/>
    </location>
</feature>
<feature type="strand" evidence="19">
    <location>
        <begin position="711"/>
        <end position="717"/>
    </location>
</feature>
<feature type="helix" evidence="19">
    <location>
        <begin position="720"/>
        <end position="731"/>
    </location>
</feature>
<feature type="helix" evidence="19">
    <location>
        <begin position="743"/>
        <end position="751"/>
    </location>
</feature>
<feature type="helix" evidence="19">
    <location>
        <begin position="773"/>
        <end position="788"/>
    </location>
</feature>
<feature type="helix" evidence="19">
    <location>
        <begin position="789"/>
        <end position="791"/>
    </location>
</feature>
<feature type="helix" evidence="19">
    <location>
        <begin position="797"/>
        <end position="800"/>
    </location>
</feature>
<feature type="helix" evidence="19">
    <location>
        <begin position="801"/>
        <end position="829"/>
    </location>
</feature>
<feature type="helix" evidence="19">
    <location>
        <begin position="833"/>
        <end position="839"/>
    </location>
</feature>
<feature type="helix" evidence="19">
    <location>
        <begin position="841"/>
        <end position="845"/>
    </location>
</feature>
<feature type="helix" evidence="19">
    <location>
        <begin position="847"/>
        <end position="859"/>
    </location>
</feature>
<feature type="strand" evidence="19">
    <location>
        <begin position="860"/>
        <end position="863"/>
    </location>
</feature>
<feature type="helix" evidence="19">
    <location>
        <begin position="864"/>
        <end position="879"/>
    </location>
</feature>
<feature type="helix" evidence="19">
    <location>
        <begin position="881"/>
        <end position="895"/>
    </location>
</feature>
<feature type="helix" evidence="19">
    <location>
        <begin position="904"/>
        <end position="927"/>
    </location>
</feature>
<feature type="turn" evidence="19">
    <location>
        <begin position="931"/>
        <end position="933"/>
    </location>
</feature>
<feature type="strand" evidence="19">
    <location>
        <begin position="935"/>
        <end position="938"/>
    </location>
</feature>
<feature type="helix" evidence="19">
    <location>
        <begin position="941"/>
        <end position="966"/>
    </location>
</feature>
<protein>
    <recommendedName>
        <fullName>Sodium/calcium exchanger 1</fullName>
    </recommendedName>
    <alternativeName>
        <fullName>Na(+)/Ca(2+)-exchange protein 1</fullName>
    </alternativeName>
    <alternativeName>
        <fullName>Solute carrier family 8 member 1</fullName>
    </alternativeName>
</protein>
<evidence type="ECO:0000250" key="1">
    <source>
        <dbReference type="UniProtKB" id="P23685"/>
    </source>
</evidence>
<evidence type="ECO:0000250" key="2">
    <source>
        <dbReference type="UniProtKB" id="P70414"/>
    </source>
</evidence>
<evidence type="ECO:0000250" key="3">
    <source>
        <dbReference type="UniProtKB" id="Q01728"/>
    </source>
</evidence>
<evidence type="ECO:0000255" key="4"/>
<evidence type="ECO:0000269" key="5">
    <source>
    </source>
</evidence>
<evidence type="ECO:0000269" key="6">
    <source>
    </source>
</evidence>
<evidence type="ECO:0000269" key="7">
    <source>
    </source>
</evidence>
<evidence type="ECO:0000269" key="8">
    <source>
    </source>
</evidence>
<evidence type="ECO:0000303" key="9">
    <source>
    </source>
</evidence>
<evidence type="ECO:0000303" key="10">
    <source>
    </source>
</evidence>
<evidence type="ECO:0000303" key="11">
    <source>
    </source>
</evidence>
<evidence type="ECO:0000303" key="12">
    <source>
    </source>
</evidence>
<evidence type="ECO:0000303" key="13">
    <source>
    </source>
</evidence>
<evidence type="ECO:0000303" key="14">
    <source>
    </source>
</evidence>
<evidence type="ECO:0000303" key="15">
    <source ref="3"/>
</evidence>
<evidence type="ECO:0000303" key="16">
    <source ref="8"/>
</evidence>
<evidence type="ECO:0000305" key="17"/>
<evidence type="ECO:0007829" key="18">
    <source>
        <dbReference type="PDB" id="8JP0"/>
    </source>
</evidence>
<evidence type="ECO:0007829" key="19">
    <source>
        <dbReference type="PDB" id="8SGI"/>
    </source>
</evidence>
<gene>
    <name type="primary">SLC8A1</name>
    <name type="synonym">CNC</name>
    <name evidence="10 13" type="synonym">NCX1</name>
</gene>
<dbReference type="EMBL" id="M91368">
    <property type="protein sequence ID" value="AAA35702.1"/>
    <property type="molecule type" value="mRNA"/>
</dbReference>
<dbReference type="EMBL" id="AF108388">
    <property type="protein sequence ID" value="AAF08987.1"/>
    <property type="molecule type" value="mRNA"/>
</dbReference>
<dbReference type="EMBL" id="AF108389">
    <property type="protein sequence ID" value="AAF08988.1"/>
    <property type="molecule type" value="mRNA"/>
</dbReference>
<dbReference type="EMBL" id="AF128524">
    <property type="protein sequence ID" value="AAD26362.1"/>
    <property type="molecule type" value="mRNA"/>
</dbReference>
<dbReference type="EMBL" id="AK291696">
    <property type="protein sequence ID" value="BAF84385.1"/>
    <property type="molecule type" value="mRNA"/>
</dbReference>
<dbReference type="EMBL" id="AC007254">
    <property type="protein sequence ID" value="AAF19235.1"/>
    <property type="molecule type" value="Genomic_DNA"/>
</dbReference>
<dbReference type="EMBL" id="AC007281">
    <property type="protein sequence ID" value="AAF19237.1"/>
    <property type="molecule type" value="Genomic_DNA"/>
</dbReference>
<dbReference type="EMBL" id="AC007377">
    <property type="protein sequence ID" value="AAX81985.1"/>
    <property type="molecule type" value="Genomic_DNA"/>
</dbReference>
<dbReference type="EMBL" id="CH471053">
    <property type="protein sequence ID" value="EAX00331.1"/>
    <property type="molecule type" value="Genomic_DNA"/>
</dbReference>
<dbReference type="EMBL" id="CH471053">
    <property type="protein sequence ID" value="EAX00332.1"/>
    <property type="molecule type" value="Genomic_DNA"/>
</dbReference>
<dbReference type="EMBL" id="CH471053">
    <property type="protein sequence ID" value="EAX00333.1"/>
    <property type="molecule type" value="Genomic_DNA"/>
</dbReference>
<dbReference type="EMBL" id="CH471053">
    <property type="protein sequence ID" value="EAX00334.1"/>
    <property type="molecule type" value="Genomic_DNA"/>
</dbReference>
<dbReference type="EMBL" id="CH471053">
    <property type="protein sequence ID" value="EAX00335.1"/>
    <property type="molecule type" value="Genomic_DNA"/>
</dbReference>
<dbReference type="EMBL" id="CH471053">
    <property type="protein sequence ID" value="EAX00336.1"/>
    <property type="molecule type" value="Genomic_DNA"/>
</dbReference>
<dbReference type="EMBL" id="AF115505">
    <property type="protein sequence ID" value="AAD17213.1"/>
    <property type="molecule type" value="mRNA"/>
</dbReference>
<dbReference type="EMBL" id="AB209075">
    <property type="protein sequence ID" value="BAD92312.1"/>
    <property type="molecule type" value="mRNA"/>
</dbReference>
<dbReference type="EMBL" id="BC098308">
    <property type="protein sequence ID" value="AAH98308.1"/>
    <property type="status" value="ALT_INIT"/>
    <property type="molecule type" value="mRNA"/>
</dbReference>
<dbReference type="CCDS" id="CCDS1806.1">
    <molecule id="P32418-1"/>
</dbReference>
<dbReference type="CCDS" id="CCDS46264.1">
    <molecule id="P32418-2"/>
</dbReference>
<dbReference type="CCDS" id="CCDS46265.1">
    <molecule id="P32418-5"/>
</dbReference>
<dbReference type="CCDS" id="CCDS59430.1">
    <molecule id="P32418-4"/>
</dbReference>
<dbReference type="CCDS" id="CCDS92742.1">
    <molecule id="P32418-3"/>
</dbReference>
<dbReference type="PIR" id="S32815">
    <property type="entry name" value="S32815"/>
</dbReference>
<dbReference type="RefSeq" id="NP_001106271.1">
    <molecule id="P32418-5"/>
    <property type="nucleotide sequence ID" value="NM_001112800.4"/>
</dbReference>
<dbReference type="RefSeq" id="NP_001106272.1">
    <molecule id="P32418-3"/>
    <property type="nucleotide sequence ID" value="NM_001112801.3"/>
</dbReference>
<dbReference type="RefSeq" id="NP_001106273.1">
    <molecule id="P32418-2"/>
    <property type="nucleotide sequence ID" value="NM_001112802.2"/>
</dbReference>
<dbReference type="RefSeq" id="NP_001239553.1">
    <molecule id="P32418-4"/>
    <property type="nucleotide sequence ID" value="NM_001252624.2"/>
</dbReference>
<dbReference type="RefSeq" id="NP_001338422.1">
    <molecule id="P32418-4"/>
    <property type="nucleotide sequence ID" value="NM_001351493.2"/>
</dbReference>
<dbReference type="RefSeq" id="NP_001338423.1">
    <molecule id="P32418-2"/>
    <property type="nucleotide sequence ID" value="NM_001351494.2"/>
</dbReference>
<dbReference type="RefSeq" id="NP_001359192.1">
    <molecule id="P32418-1"/>
    <property type="nucleotide sequence ID" value="NM_001372263.2"/>
</dbReference>
<dbReference type="RefSeq" id="NP_001381032.1">
    <molecule id="P32418-1"/>
    <property type="nucleotide sequence ID" value="NM_001394103.1"/>
</dbReference>
<dbReference type="RefSeq" id="NP_001381033.1">
    <molecule id="P32418-5"/>
    <property type="nucleotide sequence ID" value="NM_001394104.1"/>
</dbReference>
<dbReference type="RefSeq" id="NP_001381035.1">
    <molecule id="P32418-2"/>
    <property type="nucleotide sequence ID" value="NM_001394106.1"/>
</dbReference>
<dbReference type="RefSeq" id="NP_001381036.1">
    <molecule id="P32418-2"/>
    <property type="nucleotide sequence ID" value="NM_001394107.1"/>
</dbReference>
<dbReference type="RefSeq" id="NP_066920.1">
    <molecule id="P32418-1"/>
    <property type="nucleotide sequence ID" value="NM_021097.5"/>
</dbReference>
<dbReference type="RefSeq" id="XP_005264571.1">
    <property type="nucleotide sequence ID" value="XM_005264514.3"/>
</dbReference>
<dbReference type="RefSeq" id="XP_006712144.1">
    <property type="nucleotide sequence ID" value="XM_006712081.2"/>
</dbReference>
<dbReference type="RefSeq" id="XP_006712145.1">
    <property type="nucleotide sequence ID" value="XM_006712082.3"/>
</dbReference>
<dbReference type="RefSeq" id="XP_006712146.1">
    <property type="nucleotide sequence ID" value="XM_006712083.3"/>
</dbReference>
<dbReference type="RefSeq" id="XP_006712147.1">
    <property type="nucleotide sequence ID" value="XM_006712084.3"/>
</dbReference>
<dbReference type="RefSeq" id="XP_006712148.1">
    <property type="nucleotide sequence ID" value="XM_006712085.3"/>
</dbReference>
<dbReference type="RefSeq" id="XP_011531356.1">
    <property type="nucleotide sequence ID" value="XM_011533054.2"/>
</dbReference>
<dbReference type="RefSeq" id="XP_011531357.1">
    <property type="nucleotide sequence ID" value="XM_011533055.2"/>
</dbReference>
<dbReference type="RefSeq" id="XP_011531358.1">
    <property type="nucleotide sequence ID" value="XM_011533056.1"/>
</dbReference>
<dbReference type="RefSeq" id="XP_016860235.1">
    <property type="nucleotide sequence ID" value="XM_017004746.1"/>
</dbReference>
<dbReference type="RefSeq" id="XP_016860237.1">
    <property type="nucleotide sequence ID" value="XM_017004748.1"/>
</dbReference>
<dbReference type="RefSeq" id="XP_016860238.1">
    <property type="nucleotide sequence ID" value="XM_017004749.1"/>
</dbReference>
<dbReference type="RefSeq" id="XP_016860239.1">
    <property type="nucleotide sequence ID" value="XM_017004750.1"/>
</dbReference>
<dbReference type="RefSeq" id="XP_016860240.1">
    <property type="nucleotide sequence ID" value="XM_017004751.1"/>
</dbReference>
<dbReference type="RefSeq" id="XP_016860241.1">
    <property type="nucleotide sequence ID" value="XM_017004752.1"/>
</dbReference>
<dbReference type="RefSeq" id="XP_016860242.1">
    <property type="nucleotide sequence ID" value="XM_017004753.1"/>
</dbReference>
<dbReference type="RefSeq" id="XP_016860243.1">
    <property type="nucleotide sequence ID" value="XM_017004754.1"/>
</dbReference>
<dbReference type="RefSeq" id="XP_016860247.1">
    <property type="nucleotide sequence ID" value="XM_017004758.1"/>
</dbReference>
<dbReference type="PDB" id="8JP0">
    <property type="method" value="EM"/>
    <property type="resolution" value="3.50 A"/>
    <property type="chains" value="A=1-973"/>
</dbReference>
<dbReference type="PDB" id="8SGI">
    <property type="method" value="EM"/>
    <property type="resolution" value="2.90 A"/>
    <property type="chains" value="A=1-973"/>
</dbReference>
<dbReference type="PDB" id="8SGJ">
    <property type="method" value="EM"/>
    <property type="resolution" value="3.10 A"/>
    <property type="chains" value="A=1-973"/>
</dbReference>
<dbReference type="PDB" id="8SGT">
    <property type="method" value="EM"/>
    <property type="resolution" value="3.60 A"/>
    <property type="chains" value="A=1-973"/>
</dbReference>
<dbReference type="PDBsum" id="8JP0"/>
<dbReference type="PDBsum" id="8SGI"/>
<dbReference type="PDBsum" id="8SGJ"/>
<dbReference type="PDBsum" id="8SGT"/>
<dbReference type="EMDB" id="EMD-36465"/>
<dbReference type="EMDB" id="EMD-40456"/>
<dbReference type="EMDB" id="EMD-40457"/>
<dbReference type="EMDB" id="EMD-40460"/>
<dbReference type="EMDB" id="EMD-40467"/>
<dbReference type="SMR" id="P32418"/>
<dbReference type="BioGRID" id="112436">
    <property type="interactions" value="6"/>
</dbReference>
<dbReference type="DIP" id="DIP-48356N"/>
<dbReference type="ELM" id="P32418"/>
<dbReference type="FunCoup" id="P32418">
    <property type="interactions" value="1288"/>
</dbReference>
<dbReference type="IntAct" id="P32418">
    <property type="interactions" value="21"/>
</dbReference>
<dbReference type="STRING" id="9606.ENSP00000384763"/>
<dbReference type="BindingDB" id="P32418"/>
<dbReference type="ChEMBL" id="CHEMBL4076"/>
<dbReference type="DrugBank" id="DB00132">
    <property type="generic name" value="alpha-Linolenic acid"/>
</dbReference>
<dbReference type="DrugBank" id="DB11093">
    <property type="generic name" value="Calcium citrate"/>
</dbReference>
<dbReference type="DrugBank" id="DB11348">
    <property type="generic name" value="Calcium Phosphate"/>
</dbReference>
<dbReference type="DrugBank" id="DB14481">
    <property type="generic name" value="Calcium phosphate dihydrate"/>
</dbReference>
<dbReference type="DrugBank" id="DB06231">
    <property type="generic name" value="Caldaret"/>
</dbReference>
<dbReference type="DrugBank" id="DB04855">
    <property type="generic name" value="Dronedarone"/>
</dbReference>
<dbReference type="DrugBank" id="DB00159">
    <property type="generic name" value="Icosapent"/>
</dbReference>
<dbReference type="DrugBank" id="DB09498">
    <property type="generic name" value="Strontium chloride Sr-89"/>
</dbReference>
<dbReference type="DrugCentral" id="P32418"/>
<dbReference type="TCDB" id="2.A.19.3.4">
    <property type="family name" value="the ca(2+):cation antiporter (caca) family"/>
</dbReference>
<dbReference type="GlyCosmos" id="P32418">
    <property type="glycosylation" value="2 sites, No reported glycans"/>
</dbReference>
<dbReference type="GlyGen" id="P32418">
    <property type="glycosylation" value="3 sites"/>
</dbReference>
<dbReference type="iPTMnet" id="P32418"/>
<dbReference type="PhosphoSitePlus" id="P32418"/>
<dbReference type="SwissPalm" id="P32418"/>
<dbReference type="BioMuta" id="SLC8A1"/>
<dbReference type="DMDM" id="12644210"/>
<dbReference type="jPOST" id="P32418"/>
<dbReference type="MassIVE" id="P32418"/>
<dbReference type="PaxDb" id="9606-ENSP00000384763"/>
<dbReference type="PeptideAtlas" id="P32418"/>
<dbReference type="ProteomicsDB" id="54873">
    <molecule id="P32418-1"/>
</dbReference>
<dbReference type="ProteomicsDB" id="54874">
    <molecule id="P32418-2"/>
</dbReference>
<dbReference type="ProteomicsDB" id="54875">
    <molecule id="P32418-3"/>
</dbReference>
<dbReference type="ProteomicsDB" id="54876">
    <molecule id="P32418-4"/>
</dbReference>
<dbReference type="Antibodypedia" id="29673">
    <property type="antibodies" value="215 antibodies from 33 providers"/>
</dbReference>
<dbReference type="DNASU" id="6546"/>
<dbReference type="Ensembl" id="ENST00000332839.9">
    <molecule id="P32418-1"/>
    <property type="protein sequence ID" value="ENSP00000332931.4"/>
    <property type="gene ID" value="ENSG00000183023.19"/>
</dbReference>
<dbReference type="Ensembl" id="ENST00000402441.5">
    <molecule id="P32418-2"/>
    <property type="protein sequence ID" value="ENSP00000385188.1"/>
    <property type="gene ID" value="ENSG00000183023.19"/>
</dbReference>
<dbReference type="Ensembl" id="ENST00000403092.5">
    <molecule id="P32418-1"/>
    <property type="protein sequence ID" value="ENSP00000384763.1"/>
    <property type="gene ID" value="ENSG00000183023.19"/>
</dbReference>
<dbReference type="Ensembl" id="ENST00000405269.5">
    <molecule id="P32418-2"/>
    <property type="protein sequence ID" value="ENSP00000385535.1"/>
    <property type="gene ID" value="ENSG00000183023.19"/>
</dbReference>
<dbReference type="Ensembl" id="ENST00000405901.7">
    <molecule id="P32418-5"/>
    <property type="protein sequence ID" value="ENSP00000385678.3"/>
    <property type="gene ID" value="ENSG00000183023.19"/>
</dbReference>
<dbReference type="Ensembl" id="ENST00000406391.2">
    <molecule id="P32418-2"/>
    <property type="protein sequence ID" value="ENSP00000385811.2"/>
    <property type="gene ID" value="ENSG00000183023.19"/>
</dbReference>
<dbReference type="Ensembl" id="ENST00000406785.7">
    <molecule id="P32418-2"/>
    <property type="protein sequence ID" value="ENSP00000383886.1"/>
    <property type="gene ID" value="ENSG00000183023.19"/>
</dbReference>
<dbReference type="Ensembl" id="ENST00000408028.6">
    <molecule id="P32418-4"/>
    <property type="protein sequence ID" value="ENSP00000384908.2"/>
    <property type="gene ID" value="ENSG00000183023.19"/>
</dbReference>
<dbReference type="Ensembl" id="ENST00000705604.1">
    <molecule id="P32418-3"/>
    <property type="protein sequence ID" value="ENSP00000516142.1"/>
    <property type="gene ID" value="ENSG00000183023.19"/>
</dbReference>
<dbReference type="GeneID" id="6546"/>
<dbReference type="KEGG" id="hsa:6546"/>
<dbReference type="MANE-Select" id="ENST00000332839.9">
    <property type="protein sequence ID" value="ENSP00000332931.4"/>
    <property type="RefSeq nucleotide sequence ID" value="NM_021097.5"/>
    <property type="RefSeq protein sequence ID" value="NP_066920.1"/>
</dbReference>
<dbReference type="UCSC" id="uc002rrx.4">
    <molecule id="P32418-1"/>
    <property type="organism name" value="human"/>
</dbReference>
<dbReference type="AGR" id="HGNC:11068"/>
<dbReference type="CTD" id="6546"/>
<dbReference type="DisGeNET" id="6546"/>
<dbReference type="GeneCards" id="SLC8A1"/>
<dbReference type="HGNC" id="HGNC:11068">
    <property type="gene designation" value="SLC8A1"/>
</dbReference>
<dbReference type="HPA" id="ENSG00000183023">
    <property type="expression patterns" value="Tissue enriched (heart)"/>
</dbReference>
<dbReference type="MalaCards" id="SLC8A1"/>
<dbReference type="MIM" id="182305">
    <property type="type" value="gene"/>
</dbReference>
<dbReference type="neXtProt" id="NX_P32418"/>
<dbReference type="OpenTargets" id="ENSG00000183023"/>
<dbReference type="PharmGKB" id="PA314"/>
<dbReference type="VEuPathDB" id="HostDB:ENSG00000183023"/>
<dbReference type="eggNOG" id="KOG1306">
    <property type="taxonomic scope" value="Eukaryota"/>
</dbReference>
<dbReference type="GeneTree" id="ENSGT00940000155129"/>
<dbReference type="HOGENOM" id="CLU_012872_1_0_1"/>
<dbReference type="InParanoid" id="P32418"/>
<dbReference type="OMA" id="TFSMGCH"/>
<dbReference type="OrthoDB" id="418484at2759"/>
<dbReference type="PAN-GO" id="P32418">
    <property type="GO annotations" value="7 GO annotations based on evolutionary models"/>
</dbReference>
<dbReference type="PhylomeDB" id="P32418"/>
<dbReference type="TreeFam" id="TF314308"/>
<dbReference type="PathwayCommons" id="P32418"/>
<dbReference type="Reactome" id="R-HSA-418359">
    <property type="pathway name" value="Reduction of cytosolic Ca++ levels"/>
</dbReference>
<dbReference type="Reactome" id="R-HSA-425561">
    <property type="pathway name" value="Sodium/Calcium exchangers"/>
</dbReference>
<dbReference type="Reactome" id="R-HSA-5578775">
    <property type="pathway name" value="Ion homeostasis"/>
</dbReference>
<dbReference type="SignaLink" id="P32418"/>
<dbReference type="BioGRID-ORCS" id="6546">
    <property type="hits" value="9 hits in 1163 CRISPR screens"/>
</dbReference>
<dbReference type="ChiTaRS" id="SLC8A1">
    <property type="organism name" value="human"/>
</dbReference>
<dbReference type="GenomeRNAi" id="6546"/>
<dbReference type="Pharos" id="P32418">
    <property type="development level" value="Tchem"/>
</dbReference>
<dbReference type="PRO" id="PR:P32418"/>
<dbReference type="Proteomes" id="UP000005640">
    <property type="component" value="Chromosome 2"/>
</dbReference>
<dbReference type="RNAct" id="P32418">
    <property type="molecule type" value="protein"/>
</dbReference>
<dbReference type="Bgee" id="ENSG00000183023">
    <property type="expression patterns" value="Expressed in heart right ventricle and 180 other cell types or tissues"/>
</dbReference>
<dbReference type="ExpressionAtlas" id="P32418">
    <property type="expression patterns" value="baseline and differential"/>
</dbReference>
<dbReference type="GO" id="GO:0030424">
    <property type="term" value="C:axon"/>
    <property type="evidence" value="ECO:0000250"/>
    <property type="project" value="ARUK-UCL"/>
</dbReference>
<dbReference type="GO" id="GO:0043679">
    <property type="term" value="C:axon terminus"/>
    <property type="evidence" value="ECO:0000250"/>
    <property type="project" value="ARUK-UCL"/>
</dbReference>
<dbReference type="GO" id="GO:0071944">
    <property type="term" value="C:cell periphery"/>
    <property type="evidence" value="ECO:0000314"/>
    <property type="project" value="ARUK-UCL"/>
</dbReference>
<dbReference type="GO" id="GO:0030425">
    <property type="term" value="C:dendrite"/>
    <property type="evidence" value="ECO:0000250"/>
    <property type="project" value="ARUK-UCL"/>
</dbReference>
<dbReference type="GO" id="GO:0014704">
    <property type="term" value="C:intercalated disc"/>
    <property type="evidence" value="ECO:0000250"/>
    <property type="project" value="BHF-UCL"/>
</dbReference>
<dbReference type="GO" id="GO:0043025">
    <property type="term" value="C:neuronal cell body"/>
    <property type="evidence" value="ECO:0000250"/>
    <property type="project" value="ARUK-UCL"/>
</dbReference>
<dbReference type="GO" id="GO:0005654">
    <property type="term" value="C:nucleoplasm"/>
    <property type="evidence" value="ECO:0000314"/>
    <property type="project" value="HPA"/>
</dbReference>
<dbReference type="GO" id="GO:0005886">
    <property type="term" value="C:plasma membrane"/>
    <property type="evidence" value="ECO:0000314"/>
    <property type="project" value="BHF-UCL"/>
</dbReference>
<dbReference type="GO" id="GO:0098794">
    <property type="term" value="C:postsynapse"/>
    <property type="evidence" value="ECO:0000318"/>
    <property type="project" value="GO_Central"/>
</dbReference>
<dbReference type="GO" id="GO:0014069">
    <property type="term" value="C:postsynaptic density"/>
    <property type="evidence" value="ECO:0000250"/>
    <property type="project" value="ARUK-UCL"/>
</dbReference>
<dbReference type="GO" id="GO:0042383">
    <property type="term" value="C:sarcolemma"/>
    <property type="evidence" value="ECO:0000250"/>
    <property type="project" value="BHF-UCL"/>
</dbReference>
<dbReference type="GO" id="GO:0045202">
    <property type="term" value="C:synapse"/>
    <property type="evidence" value="ECO:0000314"/>
    <property type="project" value="ARUK-UCL"/>
</dbReference>
<dbReference type="GO" id="GO:0030315">
    <property type="term" value="C:T-tubule"/>
    <property type="evidence" value="ECO:0000250"/>
    <property type="project" value="BHF-UCL"/>
</dbReference>
<dbReference type="GO" id="GO:0030018">
    <property type="term" value="C:Z disc"/>
    <property type="evidence" value="ECO:0000250"/>
    <property type="project" value="BHF-UCL"/>
</dbReference>
<dbReference type="GO" id="GO:0030506">
    <property type="term" value="F:ankyrin binding"/>
    <property type="evidence" value="ECO:0000353"/>
    <property type="project" value="BHF-UCL"/>
</dbReference>
<dbReference type="GO" id="GO:0005509">
    <property type="term" value="F:calcium ion binding"/>
    <property type="evidence" value="ECO:0000250"/>
    <property type="project" value="UniProtKB"/>
</dbReference>
<dbReference type="GO" id="GO:0005432">
    <property type="term" value="F:calcium:sodium antiporter activity"/>
    <property type="evidence" value="ECO:0000314"/>
    <property type="project" value="BHF-UCL"/>
</dbReference>
<dbReference type="GO" id="GO:0005516">
    <property type="term" value="F:calmodulin binding"/>
    <property type="evidence" value="ECO:0000314"/>
    <property type="project" value="ARUK-UCL"/>
</dbReference>
<dbReference type="GO" id="GO:0008092">
    <property type="term" value="F:cytoskeletal protein binding"/>
    <property type="evidence" value="ECO:0000314"/>
    <property type="project" value="BHF-UCL"/>
</dbReference>
<dbReference type="GO" id="GO:0044325">
    <property type="term" value="F:transmembrane transporter binding"/>
    <property type="evidence" value="ECO:0000250"/>
    <property type="project" value="BHF-UCL"/>
</dbReference>
<dbReference type="GO" id="GO:1901660">
    <property type="term" value="P:calcium ion export"/>
    <property type="evidence" value="ECO:0000314"/>
    <property type="project" value="BHF-UCL"/>
</dbReference>
<dbReference type="GO" id="GO:0055074">
    <property type="term" value="P:calcium ion homeostasis"/>
    <property type="evidence" value="ECO:0000250"/>
    <property type="project" value="BHF-UCL"/>
</dbReference>
<dbReference type="GO" id="GO:0070509">
    <property type="term" value="P:calcium ion import"/>
    <property type="evidence" value="ECO:0000314"/>
    <property type="project" value="BHF-UCL"/>
</dbReference>
<dbReference type="GO" id="GO:0098703">
    <property type="term" value="P:calcium ion import across plasma membrane"/>
    <property type="evidence" value="ECO:0000318"/>
    <property type="project" value="GO_Central"/>
</dbReference>
<dbReference type="GO" id="GO:0097553">
    <property type="term" value="P:calcium ion transmembrane import into cytosol"/>
    <property type="evidence" value="ECO:0000304"/>
    <property type="project" value="BHF-UCL"/>
</dbReference>
<dbReference type="GO" id="GO:0070588">
    <property type="term" value="P:calcium ion transmembrane transport"/>
    <property type="evidence" value="ECO:0000316"/>
    <property type="project" value="UniProtKB"/>
</dbReference>
<dbReference type="GO" id="GO:0060402">
    <property type="term" value="P:calcium ion transport into cytosol"/>
    <property type="evidence" value="ECO:0000250"/>
    <property type="project" value="BHF-UCL"/>
</dbReference>
<dbReference type="GO" id="GO:0055013">
    <property type="term" value="P:cardiac muscle cell development"/>
    <property type="evidence" value="ECO:0000250"/>
    <property type="project" value="BHF-UCL"/>
</dbReference>
<dbReference type="GO" id="GO:0060048">
    <property type="term" value="P:cardiac muscle contraction"/>
    <property type="evidence" value="ECO:0000304"/>
    <property type="project" value="BHF-UCL"/>
</dbReference>
<dbReference type="GO" id="GO:0086064">
    <property type="term" value="P:cell communication by electrical coupling involved in cardiac conduction"/>
    <property type="evidence" value="ECO:0000250"/>
    <property type="project" value="BHF-UCL"/>
</dbReference>
<dbReference type="GO" id="GO:0071313">
    <property type="term" value="P:cellular response to caffeine"/>
    <property type="evidence" value="ECO:0000250"/>
    <property type="project" value="BHF-UCL"/>
</dbReference>
<dbReference type="GO" id="GO:0034614">
    <property type="term" value="P:cellular response to reactive oxygen species"/>
    <property type="evidence" value="ECO:0000314"/>
    <property type="project" value="BHF-UCL"/>
</dbReference>
<dbReference type="GO" id="GO:0006874">
    <property type="term" value="P:intracellular calcium ion homeostasis"/>
    <property type="evidence" value="ECO:0000250"/>
    <property type="project" value="ARUK-UCL"/>
</dbReference>
<dbReference type="GO" id="GO:0006883">
    <property type="term" value="P:intracellular sodium ion homeostasis"/>
    <property type="evidence" value="ECO:0000314"/>
    <property type="project" value="BHF-UCL"/>
</dbReference>
<dbReference type="GO" id="GO:0086012">
    <property type="term" value="P:membrane depolarization during cardiac muscle cell action potential"/>
    <property type="evidence" value="ECO:0000304"/>
    <property type="project" value="BHF-UCL"/>
</dbReference>
<dbReference type="GO" id="GO:0006811">
    <property type="term" value="P:monoatomic ion transport"/>
    <property type="evidence" value="ECO:0000304"/>
    <property type="project" value="Reactome"/>
</dbReference>
<dbReference type="GO" id="GO:0006936">
    <property type="term" value="P:muscle contraction"/>
    <property type="evidence" value="ECO:0000304"/>
    <property type="project" value="ProtInc"/>
</dbReference>
<dbReference type="GO" id="GO:0051481">
    <property type="term" value="P:negative regulation of cytosolic calcium ion concentration"/>
    <property type="evidence" value="ECO:0000250"/>
    <property type="project" value="BHF-UCL"/>
</dbReference>
<dbReference type="GO" id="GO:1902532">
    <property type="term" value="P:negative regulation of intracellular signal transduction"/>
    <property type="evidence" value="ECO:0000250"/>
    <property type="project" value="ARUK-UCL"/>
</dbReference>
<dbReference type="GO" id="GO:0030501">
    <property type="term" value="P:positive regulation of bone mineralization"/>
    <property type="evidence" value="ECO:0000315"/>
    <property type="project" value="UniProtKB"/>
</dbReference>
<dbReference type="GO" id="GO:0098735">
    <property type="term" value="P:positive regulation of the force of heart contraction"/>
    <property type="evidence" value="ECO:0000315"/>
    <property type="project" value="BHF-UCL"/>
</dbReference>
<dbReference type="GO" id="GO:1903779">
    <property type="term" value="P:regulation of cardiac conduction"/>
    <property type="evidence" value="ECO:0000304"/>
    <property type="project" value="Reactome"/>
</dbReference>
<dbReference type="GO" id="GO:0010882">
    <property type="term" value="P:regulation of cardiac muscle contraction by calcium ion signaling"/>
    <property type="evidence" value="ECO:0000304"/>
    <property type="project" value="BHF-UCL"/>
</dbReference>
<dbReference type="GO" id="GO:0010881">
    <property type="term" value="P:regulation of cardiac muscle contraction by regulation of the release of sequestered calcium ion"/>
    <property type="evidence" value="ECO:0000250"/>
    <property type="project" value="BHF-UCL"/>
</dbReference>
<dbReference type="GO" id="GO:0010649">
    <property type="term" value="P:regulation of cell communication by electrical coupling"/>
    <property type="evidence" value="ECO:0000304"/>
    <property type="project" value="BHF-UCL"/>
</dbReference>
<dbReference type="GO" id="GO:0010468">
    <property type="term" value="P:regulation of gene expression"/>
    <property type="evidence" value="ECO:0000250"/>
    <property type="project" value="ARUK-UCL"/>
</dbReference>
<dbReference type="GO" id="GO:0002027">
    <property type="term" value="P:regulation of heart rate"/>
    <property type="evidence" value="ECO:0000250"/>
    <property type="project" value="BHF-UCL"/>
</dbReference>
<dbReference type="GO" id="GO:0002026">
    <property type="term" value="P:regulation of the force of heart contraction"/>
    <property type="evidence" value="ECO:0000250"/>
    <property type="project" value="BHF-UCL"/>
</dbReference>
<dbReference type="GO" id="GO:0055119">
    <property type="term" value="P:relaxation of cardiac muscle"/>
    <property type="evidence" value="ECO:0000304"/>
    <property type="project" value="BHF-UCL"/>
</dbReference>
<dbReference type="GO" id="GO:0044557">
    <property type="term" value="P:relaxation of smooth muscle"/>
    <property type="evidence" value="ECO:0000250"/>
    <property type="project" value="BHF-UCL"/>
</dbReference>
<dbReference type="GO" id="GO:0035994">
    <property type="term" value="P:response to muscle stretch"/>
    <property type="evidence" value="ECO:0000315"/>
    <property type="project" value="BHF-UCL"/>
</dbReference>
<dbReference type="GO" id="GO:0036376">
    <property type="term" value="P:sodium ion export across plasma membrane"/>
    <property type="evidence" value="ECO:0000314"/>
    <property type="project" value="BHF-UCL"/>
</dbReference>
<dbReference type="GO" id="GO:0098719">
    <property type="term" value="P:sodium ion import across plasma membrane"/>
    <property type="evidence" value="ECO:0000314"/>
    <property type="project" value="BHF-UCL"/>
</dbReference>
<dbReference type="GO" id="GO:0035725">
    <property type="term" value="P:sodium ion transmembrane transport"/>
    <property type="evidence" value="ECO:0000315"/>
    <property type="project" value="UniProtKB"/>
</dbReference>
<dbReference type="GO" id="GO:0014829">
    <property type="term" value="P:vascular associated smooth muscle contraction"/>
    <property type="evidence" value="ECO:0000250"/>
    <property type="project" value="BHF-UCL"/>
</dbReference>
<dbReference type="FunFam" id="1.20.1420.30:FF:000001">
    <property type="entry name" value="sodium/calcium exchanger 1 isoform X1"/>
    <property type="match status" value="1"/>
</dbReference>
<dbReference type="FunFam" id="1.20.1420.30:FF:000003">
    <property type="entry name" value="sodium/calcium exchanger 1 isoform X1"/>
    <property type="match status" value="1"/>
</dbReference>
<dbReference type="FunFam" id="2.60.40.2030:FF:000001">
    <property type="entry name" value="sodium/calcium exchanger 1 isoform X1"/>
    <property type="match status" value="1"/>
</dbReference>
<dbReference type="Gene3D" id="2.60.40.2030">
    <property type="match status" value="2"/>
</dbReference>
<dbReference type="Gene3D" id="1.20.1420.30">
    <property type="entry name" value="NCX, central ion-binding region"/>
    <property type="match status" value="2"/>
</dbReference>
<dbReference type="InterPro" id="IPR051171">
    <property type="entry name" value="CaCA"/>
</dbReference>
<dbReference type="InterPro" id="IPR038081">
    <property type="entry name" value="CalX-like_sf"/>
</dbReference>
<dbReference type="InterPro" id="IPR003644">
    <property type="entry name" value="Calx_beta"/>
</dbReference>
<dbReference type="InterPro" id="IPR001623">
    <property type="entry name" value="DnaJ_domain"/>
</dbReference>
<dbReference type="InterPro" id="IPR004836">
    <property type="entry name" value="Na_Ca_Ex"/>
</dbReference>
<dbReference type="InterPro" id="IPR032452">
    <property type="entry name" value="Na_Ca_Ex_C-exten"/>
</dbReference>
<dbReference type="InterPro" id="IPR002987">
    <property type="entry name" value="NaCa_exhngr1"/>
</dbReference>
<dbReference type="InterPro" id="IPR004837">
    <property type="entry name" value="NaCa_Exmemb"/>
</dbReference>
<dbReference type="InterPro" id="IPR044880">
    <property type="entry name" value="NCX_ion-bd_dom_sf"/>
</dbReference>
<dbReference type="NCBIfam" id="TIGR00845">
    <property type="entry name" value="caca"/>
    <property type="match status" value="1"/>
</dbReference>
<dbReference type="PANTHER" id="PTHR11878">
    <property type="entry name" value="SODIUM/CALCIUM EXCHANGER"/>
    <property type="match status" value="1"/>
</dbReference>
<dbReference type="PANTHER" id="PTHR11878:SF6">
    <property type="entry name" value="SODIUM_CALCIUM EXCHANGER 1"/>
    <property type="match status" value="1"/>
</dbReference>
<dbReference type="Pfam" id="PF03160">
    <property type="entry name" value="Calx-beta"/>
    <property type="match status" value="1"/>
</dbReference>
<dbReference type="Pfam" id="PF01699">
    <property type="entry name" value="Na_Ca_ex"/>
    <property type="match status" value="2"/>
</dbReference>
<dbReference type="Pfam" id="PF16494">
    <property type="entry name" value="Na_Ca_ex_C"/>
    <property type="match status" value="1"/>
</dbReference>
<dbReference type="PRINTS" id="PR01259">
    <property type="entry name" value="NACAEXCHNGR"/>
</dbReference>
<dbReference type="PRINTS" id="PR01260">
    <property type="entry name" value="NACAEXCHNGR1"/>
</dbReference>
<dbReference type="SMART" id="SM00237">
    <property type="entry name" value="Calx_beta"/>
    <property type="match status" value="2"/>
</dbReference>
<dbReference type="SUPFAM" id="SSF141072">
    <property type="entry name" value="CalX-like"/>
    <property type="match status" value="2"/>
</dbReference>